<protein>
    <recommendedName>
        <fullName evidence="1">1-(5-phosphoribosyl)-5-[(5-phosphoribosylamino)methylideneamino] imidazole-4-carboxamide isomerase</fullName>
        <ecNumber evidence="1">5.3.1.16</ecNumber>
    </recommendedName>
    <alternativeName>
        <fullName evidence="1">Phosphoribosylformimino-5-aminoimidazole carboxamide ribotide isomerase</fullName>
    </alternativeName>
</protein>
<reference key="1">
    <citation type="journal article" date="2005" name="Infect. Immun.">
        <title>Whole-genome analyses of speciation events in pathogenic Brucellae.</title>
        <authorList>
            <person name="Chain P.S."/>
            <person name="Comerci D.J."/>
            <person name="Tolmasky M.E."/>
            <person name="Larimer F.W."/>
            <person name="Malfatti S.A."/>
            <person name="Vergez L.M."/>
            <person name="Aguero F."/>
            <person name="Land M.L."/>
            <person name="Ugalde R.A."/>
            <person name="Garcia E."/>
        </authorList>
    </citation>
    <scope>NUCLEOTIDE SEQUENCE [LARGE SCALE GENOMIC DNA]</scope>
    <source>
        <strain>2308</strain>
    </source>
</reference>
<comment type="catalytic activity">
    <reaction evidence="1">
        <text>1-(5-phospho-beta-D-ribosyl)-5-[(5-phospho-beta-D-ribosylamino)methylideneamino]imidazole-4-carboxamide = 5-[(5-phospho-1-deoxy-D-ribulos-1-ylimino)methylamino]-1-(5-phospho-beta-D-ribosyl)imidazole-4-carboxamide</text>
        <dbReference type="Rhea" id="RHEA:15469"/>
        <dbReference type="ChEBI" id="CHEBI:58435"/>
        <dbReference type="ChEBI" id="CHEBI:58525"/>
        <dbReference type="EC" id="5.3.1.16"/>
    </reaction>
</comment>
<comment type="pathway">
    <text evidence="1">Amino-acid biosynthesis; L-histidine biosynthesis; L-histidine from 5-phospho-alpha-D-ribose 1-diphosphate: step 4/9.</text>
</comment>
<comment type="subcellular location">
    <subcellularLocation>
        <location evidence="1">Cytoplasm</location>
    </subcellularLocation>
</comment>
<comment type="similarity">
    <text evidence="1">Belongs to the HisA/HisF family.</text>
</comment>
<keyword id="KW-0028">Amino-acid biosynthesis</keyword>
<keyword id="KW-0963">Cytoplasm</keyword>
<keyword id="KW-0368">Histidine biosynthesis</keyword>
<keyword id="KW-0413">Isomerase</keyword>
<keyword id="KW-1185">Reference proteome</keyword>
<sequence length="243" mass="25589">MILFPAIDLKDGQCVRLKLGDMDQATIYNEDPAAQAKAFEDQGFEWLHVVDLNGAFAGESVNGTAVEAILKATKNPVQLGGGIRTLAHIENWLSRGLRRVILGTVAVRDPALVMEACKAFPGQVAVGIDAKGGKVAVEGWAEASRLGVIELAKKFEGAGVAAIIYTDIDRDGVLAGINWDSTLALAEAVSIPVIASGGLASMEDIRRLATPEMRKLEGAISGRALYDGRIDPAEALSVLRAAA</sequence>
<name>HIS4_BRUA2</name>
<accession>Q2YQY9</accession>
<proteinExistence type="inferred from homology"/>
<dbReference type="EC" id="5.3.1.16" evidence="1"/>
<dbReference type="EMBL" id="AM040264">
    <property type="protein sequence ID" value="CAJ12041.1"/>
    <property type="molecule type" value="Genomic_DNA"/>
</dbReference>
<dbReference type="RefSeq" id="WP_002965150.1">
    <property type="nucleotide sequence ID" value="NZ_KN046823.1"/>
</dbReference>
<dbReference type="SMR" id="Q2YQY9"/>
<dbReference type="STRING" id="359391.BAB1_2085"/>
<dbReference type="GeneID" id="97534653"/>
<dbReference type="KEGG" id="bmf:BAB1_2085"/>
<dbReference type="PATRIC" id="fig|359391.11.peg.1319"/>
<dbReference type="HOGENOM" id="CLU_048577_1_1_5"/>
<dbReference type="PhylomeDB" id="Q2YQY9"/>
<dbReference type="UniPathway" id="UPA00031">
    <property type="reaction ID" value="UER00009"/>
</dbReference>
<dbReference type="Proteomes" id="UP000002719">
    <property type="component" value="Chromosome I"/>
</dbReference>
<dbReference type="GO" id="GO:0005737">
    <property type="term" value="C:cytoplasm"/>
    <property type="evidence" value="ECO:0007669"/>
    <property type="project" value="UniProtKB-SubCell"/>
</dbReference>
<dbReference type="GO" id="GO:0003949">
    <property type="term" value="F:1-(5-phosphoribosyl)-5-[(5-phosphoribosylamino)methylideneamino]imidazole-4-carboxamide isomerase activity"/>
    <property type="evidence" value="ECO:0007669"/>
    <property type="project" value="UniProtKB-UniRule"/>
</dbReference>
<dbReference type="GO" id="GO:0000105">
    <property type="term" value="P:L-histidine biosynthetic process"/>
    <property type="evidence" value="ECO:0007669"/>
    <property type="project" value="UniProtKB-UniRule"/>
</dbReference>
<dbReference type="GO" id="GO:0000162">
    <property type="term" value="P:L-tryptophan biosynthetic process"/>
    <property type="evidence" value="ECO:0007669"/>
    <property type="project" value="TreeGrafter"/>
</dbReference>
<dbReference type="CDD" id="cd04732">
    <property type="entry name" value="HisA"/>
    <property type="match status" value="1"/>
</dbReference>
<dbReference type="FunFam" id="3.20.20.70:FF:000009">
    <property type="entry name" value="1-(5-phosphoribosyl)-5-[(5-phosphoribosylamino)methylideneamino] imidazole-4-carboxamide isomerase"/>
    <property type="match status" value="1"/>
</dbReference>
<dbReference type="Gene3D" id="3.20.20.70">
    <property type="entry name" value="Aldolase class I"/>
    <property type="match status" value="1"/>
</dbReference>
<dbReference type="HAMAP" id="MF_01014">
    <property type="entry name" value="HisA"/>
    <property type="match status" value="1"/>
</dbReference>
<dbReference type="InterPro" id="IPR013785">
    <property type="entry name" value="Aldolase_TIM"/>
</dbReference>
<dbReference type="InterPro" id="IPR006062">
    <property type="entry name" value="His_biosynth"/>
</dbReference>
<dbReference type="InterPro" id="IPR006063">
    <property type="entry name" value="HisA_bact_arch"/>
</dbReference>
<dbReference type="InterPro" id="IPR044524">
    <property type="entry name" value="Isoase_HisA-like"/>
</dbReference>
<dbReference type="InterPro" id="IPR023016">
    <property type="entry name" value="Isoase_HisA-like_bact"/>
</dbReference>
<dbReference type="InterPro" id="IPR011060">
    <property type="entry name" value="RibuloseP-bd_barrel"/>
</dbReference>
<dbReference type="NCBIfam" id="TIGR00007">
    <property type="entry name" value="1-(5-phosphoribosyl)-5-[(5-phosphoribosylamino)methylideneamino]imidazole-4-carboxamide isomerase"/>
    <property type="match status" value="1"/>
</dbReference>
<dbReference type="PANTHER" id="PTHR43090">
    <property type="entry name" value="1-(5-PHOSPHORIBOSYL)-5-[(5-PHOSPHORIBOSYLAMINO)METHYLIDENEAMINO] IMIDAZOLE-4-CARBOXAMIDE ISOMERASE"/>
    <property type="match status" value="1"/>
</dbReference>
<dbReference type="PANTHER" id="PTHR43090:SF2">
    <property type="entry name" value="1-(5-PHOSPHORIBOSYL)-5-[(5-PHOSPHORIBOSYLAMINO)METHYLIDENEAMINO] IMIDAZOLE-4-CARBOXAMIDE ISOMERASE"/>
    <property type="match status" value="1"/>
</dbReference>
<dbReference type="Pfam" id="PF00977">
    <property type="entry name" value="His_biosynth"/>
    <property type="match status" value="1"/>
</dbReference>
<dbReference type="SUPFAM" id="SSF51366">
    <property type="entry name" value="Ribulose-phoshate binding barrel"/>
    <property type="match status" value="1"/>
</dbReference>
<organism>
    <name type="scientific">Brucella abortus (strain 2308)</name>
    <dbReference type="NCBI Taxonomy" id="359391"/>
    <lineage>
        <taxon>Bacteria</taxon>
        <taxon>Pseudomonadati</taxon>
        <taxon>Pseudomonadota</taxon>
        <taxon>Alphaproteobacteria</taxon>
        <taxon>Hyphomicrobiales</taxon>
        <taxon>Brucellaceae</taxon>
        <taxon>Brucella/Ochrobactrum group</taxon>
        <taxon>Brucella</taxon>
    </lineage>
</organism>
<feature type="chain" id="PRO_0000229045" description="1-(5-phosphoribosyl)-5-[(5-phosphoribosylamino)methylideneamino] imidazole-4-carboxamide isomerase">
    <location>
        <begin position="1"/>
        <end position="243"/>
    </location>
</feature>
<feature type="active site" description="Proton acceptor" evidence="1">
    <location>
        <position position="8"/>
    </location>
</feature>
<feature type="active site" description="Proton donor" evidence="1">
    <location>
        <position position="129"/>
    </location>
</feature>
<evidence type="ECO:0000255" key="1">
    <source>
        <dbReference type="HAMAP-Rule" id="MF_01014"/>
    </source>
</evidence>
<gene>
    <name evidence="1" type="primary">hisA</name>
    <name type="ordered locus">BAB1_2085</name>
</gene>